<protein>
    <recommendedName>
        <fullName evidence="1">Small ribosomal subunit protein uS14</fullName>
    </recommendedName>
    <alternativeName>
        <fullName evidence="2">30S ribosomal protein S14</fullName>
    </alternativeName>
</protein>
<comment type="function">
    <text evidence="1">Binds 16S rRNA, required for the assembly of 30S particles and may also be responsible for determining the conformation of the 16S rRNA at the A site.</text>
</comment>
<comment type="subunit">
    <text evidence="1">Part of the 30S ribosomal subunit. Contacts proteins S3 and S10.</text>
</comment>
<comment type="similarity">
    <text evidence="1">Belongs to the universal ribosomal protein uS14 family.</text>
</comment>
<name>RS14_BURTA</name>
<dbReference type="EMBL" id="CP000086">
    <property type="protein sequence ID" value="ABC37001.1"/>
    <property type="molecule type" value="Genomic_DNA"/>
</dbReference>
<dbReference type="RefSeq" id="WP_004197948.1">
    <property type="nucleotide sequence ID" value="NZ_CP008786.1"/>
</dbReference>
<dbReference type="SMR" id="Q2SU40"/>
<dbReference type="GeneID" id="93061819"/>
<dbReference type="KEGG" id="bte:BTH_I3055"/>
<dbReference type="HOGENOM" id="CLU_139869_0_1_4"/>
<dbReference type="Proteomes" id="UP000001930">
    <property type="component" value="Chromosome I"/>
</dbReference>
<dbReference type="GO" id="GO:0005737">
    <property type="term" value="C:cytoplasm"/>
    <property type="evidence" value="ECO:0007669"/>
    <property type="project" value="UniProtKB-ARBA"/>
</dbReference>
<dbReference type="GO" id="GO:0015935">
    <property type="term" value="C:small ribosomal subunit"/>
    <property type="evidence" value="ECO:0007669"/>
    <property type="project" value="TreeGrafter"/>
</dbReference>
<dbReference type="GO" id="GO:0019843">
    <property type="term" value="F:rRNA binding"/>
    <property type="evidence" value="ECO:0007669"/>
    <property type="project" value="UniProtKB-UniRule"/>
</dbReference>
<dbReference type="GO" id="GO:0003735">
    <property type="term" value="F:structural constituent of ribosome"/>
    <property type="evidence" value="ECO:0007669"/>
    <property type="project" value="InterPro"/>
</dbReference>
<dbReference type="GO" id="GO:0006412">
    <property type="term" value="P:translation"/>
    <property type="evidence" value="ECO:0007669"/>
    <property type="project" value="UniProtKB-UniRule"/>
</dbReference>
<dbReference type="FunFam" id="1.10.287.1480:FF:000001">
    <property type="entry name" value="30S ribosomal protein S14"/>
    <property type="match status" value="1"/>
</dbReference>
<dbReference type="Gene3D" id="1.10.287.1480">
    <property type="match status" value="1"/>
</dbReference>
<dbReference type="HAMAP" id="MF_00537">
    <property type="entry name" value="Ribosomal_uS14_1"/>
    <property type="match status" value="1"/>
</dbReference>
<dbReference type="InterPro" id="IPR001209">
    <property type="entry name" value="Ribosomal_uS14"/>
</dbReference>
<dbReference type="InterPro" id="IPR023036">
    <property type="entry name" value="Ribosomal_uS14_bac/plastid"/>
</dbReference>
<dbReference type="NCBIfam" id="NF006477">
    <property type="entry name" value="PRK08881.1"/>
    <property type="match status" value="1"/>
</dbReference>
<dbReference type="PANTHER" id="PTHR19836">
    <property type="entry name" value="30S RIBOSOMAL PROTEIN S14"/>
    <property type="match status" value="1"/>
</dbReference>
<dbReference type="PANTHER" id="PTHR19836:SF19">
    <property type="entry name" value="SMALL RIBOSOMAL SUBUNIT PROTEIN US14M"/>
    <property type="match status" value="1"/>
</dbReference>
<dbReference type="Pfam" id="PF00253">
    <property type="entry name" value="Ribosomal_S14"/>
    <property type="match status" value="1"/>
</dbReference>
<dbReference type="SUPFAM" id="SSF57716">
    <property type="entry name" value="Glucocorticoid receptor-like (DNA-binding domain)"/>
    <property type="match status" value="1"/>
</dbReference>
<sequence>MAKLALIEREKKRARLAQKYAPKRAELKAIIDDASKSDEERYAARLELQQLPRNANPTRKRNRCAITGRPRGTFRKFGLARNKIREIAFRGEIPGLTKASW</sequence>
<reference key="1">
    <citation type="journal article" date="2005" name="BMC Genomics">
        <title>Bacterial genome adaptation to niches: divergence of the potential virulence genes in three Burkholderia species of different survival strategies.</title>
        <authorList>
            <person name="Kim H.S."/>
            <person name="Schell M.A."/>
            <person name="Yu Y."/>
            <person name="Ulrich R.L."/>
            <person name="Sarria S.H."/>
            <person name="Nierman W.C."/>
            <person name="DeShazer D."/>
        </authorList>
    </citation>
    <scope>NUCLEOTIDE SEQUENCE [LARGE SCALE GENOMIC DNA]</scope>
    <source>
        <strain>ATCC 700388 / DSM 13276 / CCUG 48851 / CIP 106301 / E264</strain>
    </source>
</reference>
<gene>
    <name evidence="1" type="primary">rpsN</name>
    <name type="ordered locus">BTH_I3055</name>
</gene>
<evidence type="ECO:0000255" key="1">
    <source>
        <dbReference type="HAMAP-Rule" id="MF_00537"/>
    </source>
</evidence>
<evidence type="ECO:0000305" key="2"/>
<accession>Q2SU40</accession>
<proteinExistence type="inferred from homology"/>
<feature type="chain" id="PRO_1000128344" description="Small ribosomal subunit protein uS14">
    <location>
        <begin position="1"/>
        <end position="101"/>
    </location>
</feature>
<organism>
    <name type="scientific">Burkholderia thailandensis (strain ATCC 700388 / DSM 13276 / CCUG 48851 / CIP 106301 / E264)</name>
    <dbReference type="NCBI Taxonomy" id="271848"/>
    <lineage>
        <taxon>Bacteria</taxon>
        <taxon>Pseudomonadati</taxon>
        <taxon>Pseudomonadota</taxon>
        <taxon>Betaproteobacteria</taxon>
        <taxon>Burkholderiales</taxon>
        <taxon>Burkholderiaceae</taxon>
        <taxon>Burkholderia</taxon>
        <taxon>pseudomallei group</taxon>
    </lineage>
</organism>
<keyword id="KW-0687">Ribonucleoprotein</keyword>
<keyword id="KW-0689">Ribosomal protein</keyword>
<keyword id="KW-0694">RNA-binding</keyword>
<keyword id="KW-0699">rRNA-binding</keyword>